<reference key="1">
    <citation type="journal article" date="1993" name="J. Gen. Virol.">
        <title>Sequencing and antigenic studies of a Norwegian virus isolated from encephalomyelitic sheep confirm the existence of louping ill virus outside Great Britain and Ireland.</title>
        <authorList>
            <person name="Gao G.F."/>
            <person name="Jiang W.R."/>
            <person name="Hussain M.H."/>
            <person name="Venugopal K."/>
            <person name="Gritsun T.S."/>
            <person name="Reid H.W."/>
            <person name="Gould E.A."/>
        </authorList>
    </citation>
    <scope>NUCLEOTIDE SEQUENCE [GENOMIC RNA]</scope>
</reference>
<organismHost>
    <name type="scientific">Bos taurus</name>
    <name type="common">Bovine</name>
    <dbReference type="NCBI Taxonomy" id="9913"/>
</organismHost>
<organismHost>
    <name type="scientific">Canis lupus familiaris</name>
    <name type="common">Dog</name>
    <name type="synonym">Canis familiaris</name>
    <dbReference type="NCBI Taxonomy" id="9615"/>
</organismHost>
<organismHost>
    <name type="scientific">Cervinae</name>
    <dbReference type="NCBI Taxonomy" id="34878"/>
</organismHost>
<organismHost>
    <name type="scientific">Equus caballus</name>
    <name type="common">Horse</name>
    <dbReference type="NCBI Taxonomy" id="9796"/>
</organismHost>
<organismHost>
    <name type="scientific">Homo sapiens</name>
    <name type="common">Human</name>
    <dbReference type="NCBI Taxonomy" id="9606"/>
</organismHost>
<organismHost>
    <name type="scientific">Ixodes ricinus</name>
    <name type="common">Common tick</name>
    <name type="synonym">Acarus ricinus</name>
    <dbReference type="NCBI Taxonomy" id="34613"/>
</organismHost>
<organismHost>
    <name type="scientific">Ovis aries</name>
    <name type="common">Sheep</name>
    <dbReference type="NCBI Taxonomy" id="9940"/>
</organismHost>
<organismHost>
    <name type="scientific">Sus scrofa</name>
    <name type="common">Pig</name>
    <dbReference type="NCBI Taxonomy" id="9823"/>
</organismHost>
<comment type="function">
    <molecule>Envelope protein E</molecule>
    <text evidence="3">Binds to host cell surface receptor and mediates fusion between viral and cellular membranes. Envelope protein is synthesized in the endoplasmic reticulum in the form of heterodimer with protein prM. They play a role in virion budding in the ER, and the newly formed immature particle is covered with 60 spikes composed of heterodimer between precursor prM and envelope protein E. The virion is transported to the Golgi apparatus where the low pH causes dissociation of PrM-E heterodimers and formation of E homodimers. prM-E cleavage is ineficient, and many virions are only partially matured. These uncleaved prM would play a role in immune evasion.</text>
</comment>
<comment type="subunit">
    <molecule>Envelope protein E</molecule>
    <text evidence="3">Homodimer; in the endoplasmic reticulum and Golgi.</text>
</comment>
<comment type="subcellular location">
    <molecule>Envelope protein E</molecule>
    <subcellularLocation>
        <location evidence="3">Virion membrane</location>
        <topology evidence="4">Multi-pass membrane protein</topology>
    </subcellularLocation>
    <subcellularLocation>
        <location evidence="3">Host endoplasmic reticulum membrane</location>
        <topology evidence="4">Multi-pass membrane protein</topology>
    </subcellularLocation>
</comment>
<comment type="PTM">
    <molecule>Envelope protein E</molecule>
    <text evidence="3">N-glycosylated.</text>
</comment>
<proteinExistence type="inferred from homology"/>
<dbReference type="EMBL" id="D12936">
    <property type="protein sequence ID" value="BAA02312.1"/>
    <property type="molecule type" value="Genomic_RNA"/>
</dbReference>
<dbReference type="PIR" id="JQ1884">
    <property type="entry name" value="JQ1884"/>
</dbReference>
<dbReference type="SMR" id="P35766"/>
<dbReference type="GO" id="GO:0044167">
    <property type="term" value="C:host cell endoplasmic reticulum membrane"/>
    <property type="evidence" value="ECO:0007669"/>
    <property type="project" value="UniProtKB-SubCell"/>
</dbReference>
<dbReference type="GO" id="GO:0016020">
    <property type="term" value="C:membrane"/>
    <property type="evidence" value="ECO:0007669"/>
    <property type="project" value="UniProtKB-KW"/>
</dbReference>
<dbReference type="GO" id="GO:0019031">
    <property type="term" value="C:viral envelope"/>
    <property type="evidence" value="ECO:0007669"/>
    <property type="project" value="UniProtKB-KW"/>
</dbReference>
<dbReference type="GO" id="GO:0055036">
    <property type="term" value="C:virion membrane"/>
    <property type="evidence" value="ECO:0007669"/>
    <property type="project" value="UniProtKB-SubCell"/>
</dbReference>
<dbReference type="GO" id="GO:0046983">
    <property type="term" value="F:protein dimerization activity"/>
    <property type="evidence" value="ECO:0007669"/>
    <property type="project" value="InterPro"/>
</dbReference>
<dbReference type="GO" id="GO:0075512">
    <property type="term" value="P:clathrin-dependent endocytosis of virus by host cell"/>
    <property type="evidence" value="ECO:0007669"/>
    <property type="project" value="UniProtKB-KW"/>
</dbReference>
<dbReference type="GO" id="GO:0039654">
    <property type="term" value="P:fusion of virus membrane with host endosome membrane"/>
    <property type="evidence" value="ECO:0007669"/>
    <property type="project" value="UniProtKB-KW"/>
</dbReference>
<dbReference type="GO" id="GO:0052170">
    <property type="term" value="P:symbiont-mediated suppression of host innate immune response"/>
    <property type="evidence" value="ECO:0007669"/>
    <property type="project" value="UniProtKB-KW"/>
</dbReference>
<dbReference type="GO" id="GO:0019062">
    <property type="term" value="P:virion attachment to host cell"/>
    <property type="evidence" value="ECO:0007669"/>
    <property type="project" value="UniProtKB-KW"/>
</dbReference>
<dbReference type="CDD" id="cd12149">
    <property type="entry name" value="Flavi_E_C"/>
    <property type="match status" value="1"/>
</dbReference>
<dbReference type="FunFam" id="1.20.1280.260:FF:000001">
    <property type="entry name" value="Envelope glycoprotein"/>
    <property type="match status" value="1"/>
</dbReference>
<dbReference type="Gene3D" id="1.20.1280.260">
    <property type="match status" value="1"/>
</dbReference>
<dbReference type="Gene3D" id="2.60.40.350">
    <property type="match status" value="1"/>
</dbReference>
<dbReference type="Gene3D" id="2.60.98.10">
    <property type="entry name" value="Tick-borne Encephalitis virus Glycoprotein, domain 1"/>
    <property type="match status" value="1"/>
</dbReference>
<dbReference type="Gene3D" id="3.30.67.10">
    <property type="entry name" value="Viral Envelope Glycoprotein, domain 2"/>
    <property type="match status" value="1"/>
</dbReference>
<dbReference type="Gene3D" id="3.30.387.10">
    <property type="entry name" value="Viral Envelope Glycoprotein, domain 3"/>
    <property type="match status" value="1"/>
</dbReference>
<dbReference type="InterPro" id="IPR013755">
    <property type="entry name" value="Flav_gly_cen_dom_subdom1"/>
</dbReference>
<dbReference type="InterPro" id="IPR027287">
    <property type="entry name" value="Flavi_E_Ig-like"/>
</dbReference>
<dbReference type="InterPro" id="IPR026470">
    <property type="entry name" value="Flavi_E_Stem/Anchor_dom"/>
</dbReference>
<dbReference type="InterPro" id="IPR038345">
    <property type="entry name" value="Flavi_E_Stem/Anchor_dom_sf"/>
</dbReference>
<dbReference type="InterPro" id="IPR011998">
    <property type="entry name" value="Flavi_Glycoprot_E_cen/dimer"/>
</dbReference>
<dbReference type="InterPro" id="IPR000336">
    <property type="entry name" value="Flavivir/Alphavir_Ig-like_sf"/>
</dbReference>
<dbReference type="InterPro" id="IPR036253">
    <property type="entry name" value="Glycoprot_cen/dimer_sf"/>
</dbReference>
<dbReference type="InterPro" id="IPR038055">
    <property type="entry name" value="Glycoprot_E_dimer_dom"/>
</dbReference>
<dbReference type="InterPro" id="IPR013756">
    <property type="entry name" value="GlyE_cen_dom_subdom2"/>
</dbReference>
<dbReference type="InterPro" id="IPR014756">
    <property type="entry name" value="Ig_E-set"/>
</dbReference>
<dbReference type="NCBIfam" id="TIGR04240">
    <property type="entry name" value="flavi_E_stem"/>
    <property type="match status" value="1"/>
</dbReference>
<dbReference type="Pfam" id="PF21659">
    <property type="entry name" value="Flavi_E_stem"/>
    <property type="match status" value="1"/>
</dbReference>
<dbReference type="Pfam" id="PF02832">
    <property type="entry name" value="Flavi_glycop_C"/>
    <property type="match status" value="1"/>
</dbReference>
<dbReference type="Pfam" id="PF00869">
    <property type="entry name" value="Flavi_glycoprot"/>
    <property type="match status" value="1"/>
</dbReference>
<dbReference type="SUPFAM" id="SSF81296">
    <property type="entry name" value="E set domains"/>
    <property type="match status" value="1"/>
</dbReference>
<dbReference type="SUPFAM" id="SSF56983">
    <property type="entry name" value="Viral glycoprotein, central and dimerisation domains"/>
    <property type="match status" value="1"/>
</dbReference>
<name>POLG_LIVNO</name>
<organism>
    <name type="scientific">Louping ill virus (strain Norway)</name>
    <name type="common">Li</name>
    <dbReference type="NCBI Taxonomy" id="36389"/>
    <lineage>
        <taxon>Viruses</taxon>
        <taxon>Riboviria</taxon>
        <taxon>Orthornavirae</taxon>
        <taxon>Kitrinoviricota</taxon>
        <taxon>Flasuviricetes</taxon>
        <taxon>Amarillovirales</taxon>
        <taxon>Flaviviridae</taxon>
        <taxon>Orthoflavivirus</taxon>
        <taxon>Orthoflavivirus loupingi</taxon>
    </lineage>
</organism>
<sequence length="496" mass="53650">SRCTHLENRDFVTGTQGTTRVTLVLELGGCVTITAEGKPSMDVWLDAIYQESPAKTREYCLHAKLSETKVAARCPTMGPAVLTEERQIGTVCKRDQSDRGWGNHCGLFGKGSIVACVKAACEAKKKATGYVYDANKIVYTVKVEPHTGDYVAANETHKGRKTATFTVSSEKTILTLGEYGDVSLLCRVASGVDLAQTIILELDKTAEHLPTAWQVHRDWFNDLALPWKHDGNPHWNNAERLVEFGAPHAVKMDVYNLGDQTGVLLKALAGVPVAHIEGNKYHLKSGHVTCEVGLEKLKMKGLTYTMCDKSKFAWKRTPTDSGHDTVVMEVTFSGSKPCRIPVRAVAHGSPDVNVAMLITPNPTIENDGGGFIEMQLPPGDNIIYVGELSHQWFQTGSSIGRVFQTTRKGIERLTVIGEHAWDFGSAGGFFSSIGKAVHTVLGGAFNSIFGGVGFLPKLLMGVALAWLGLNTRNPTMSMSFLMAGGLVLAMTLGVGA</sequence>
<protein>
    <recommendedName>
        <fullName>Genome polyprotein</fullName>
    </recommendedName>
    <component>
        <recommendedName>
            <fullName>Envelope protein E</fullName>
        </recommendedName>
    </component>
</protein>
<accession>P35766</accession>
<evidence type="ECO:0000250" key="1">
    <source>
        <dbReference type="UniProtKB" id="P06935"/>
    </source>
</evidence>
<evidence type="ECO:0000250" key="2">
    <source>
        <dbReference type="UniProtKB" id="P14336"/>
    </source>
</evidence>
<evidence type="ECO:0000250" key="3">
    <source>
        <dbReference type="UniProtKB" id="P17763"/>
    </source>
</evidence>
<evidence type="ECO:0000255" key="4"/>
<evidence type="ECO:0000255" key="5">
    <source>
        <dbReference type="PROSITE-ProRule" id="PRU00498"/>
    </source>
</evidence>
<keyword id="KW-1165">Clathrin-mediated endocytosis of virus by host</keyword>
<keyword id="KW-0165">Cleavage on pair of basic residues</keyword>
<keyword id="KW-1015">Disulfide bond</keyword>
<keyword id="KW-1170">Fusion of virus membrane with host endosomal membrane</keyword>
<keyword id="KW-1168">Fusion of virus membrane with host membrane</keyword>
<keyword id="KW-0325">Glycoprotein</keyword>
<keyword id="KW-1038">Host endoplasmic reticulum</keyword>
<keyword id="KW-1043">Host membrane</keyword>
<keyword id="KW-0945">Host-virus interaction</keyword>
<keyword id="KW-1090">Inhibition of host innate immune response by virus</keyword>
<keyword id="KW-0472">Membrane</keyword>
<keyword id="KW-0941">Suppressor of RNA silencing</keyword>
<keyword id="KW-0812">Transmembrane</keyword>
<keyword id="KW-1133">Transmembrane helix</keyword>
<keyword id="KW-1161">Viral attachment to host cell</keyword>
<keyword id="KW-0261">Viral envelope protein</keyword>
<keyword id="KW-0899">Viral immunoevasion</keyword>
<keyword id="KW-1162">Viral penetration into host cytoplasm</keyword>
<keyword id="KW-0946">Virion</keyword>
<keyword id="KW-1164">Virus endocytosis by host</keyword>
<keyword id="KW-1160">Virus entry into host cell</keyword>
<keyword id="KW-0862">Zinc</keyword>
<feature type="chain" id="PRO_0000405186" description="Genome polyprotein">
    <location>
        <begin position="1" status="less than"/>
        <end position="496" status="greater than"/>
    </location>
</feature>
<feature type="chain" id="PRO_0000037834" description="Envelope protein E" evidence="1">
    <location>
        <begin position="1"/>
        <end position="496"/>
    </location>
</feature>
<feature type="topological domain" description="Extracellular" evidence="4">
    <location>
        <begin position="1" status="less than"/>
        <end position="447"/>
    </location>
</feature>
<feature type="transmembrane region" description="Helical" evidence="4">
    <location>
        <begin position="448"/>
        <end position="468"/>
    </location>
</feature>
<feature type="topological domain" description="Cytoplasmic" evidence="4">
    <location>
        <begin position="469"/>
        <end position="479"/>
    </location>
</feature>
<feature type="transmembrane region" description="Helical" evidence="4">
    <location>
        <begin position="480"/>
        <end position="496" status="greater than"/>
    </location>
</feature>
<feature type="region of interest" description="Fusion peptide" evidence="2">
    <location>
        <begin position="98"/>
        <end position="111"/>
    </location>
</feature>
<feature type="glycosylation site" description="N-linked (GlcNAc...) asparagine; by host" evidence="5">
    <location>
        <position position="154"/>
    </location>
</feature>
<feature type="disulfide bond" evidence="2">
    <location>
        <begin position="3"/>
        <end position="30"/>
    </location>
</feature>
<feature type="disulfide bond" evidence="3">
    <location>
        <begin position="60"/>
        <end position="121"/>
    </location>
</feature>
<feature type="disulfide bond" evidence="2">
    <location>
        <begin position="60"/>
        <end position="116"/>
    </location>
</feature>
<feature type="disulfide bond" evidence="2">
    <location>
        <begin position="74"/>
        <end position="105"/>
    </location>
</feature>
<feature type="disulfide bond" evidence="2">
    <location>
        <begin position="92"/>
        <end position="121"/>
    </location>
</feature>
<feature type="disulfide bond" evidence="3">
    <location>
        <begin position="92"/>
        <end position="116"/>
    </location>
</feature>
<feature type="disulfide bond" evidence="2">
    <location>
        <begin position="186"/>
        <end position="290"/>
    </location>
</feature>
<feature type="disulfide bond" evidence="2">
    <location>
        <begin position="307"/>
        <end position="338"/>
    </location>
</feature>
<feature type="non-terminal residue">
    <location>
        <position position="1"/>
    </location>
</feature>
<feature type="non-terminal residue">
    <location>
        <position position="496"/>
    </location>
</feature>